<organism>
    <name type="scientific">Chlamydia caviae (strain ATCC VR-813 / DSM 19441 / 03DC25 / GPIC)</name>
    <name type="common">Chlamydophila caviae</name>
    <dbReference type="NCBI Taxonomy" id="227941"/>
    <lineage>
        <taxon>Bacteria</taxon>
        <taxon>Pseudomonadati</taxon>
        <taxon>Chlamydiota</taxon>
        <taxon>Chlamydiia</taxon>
        <taxon>Chlamydiales</taxon>
        <taxon>Chlamydiaceae</taxon>
        <taxon>Chlamydia/Chlamydophila group</taxon>
        <taxon>Chlamydia</taxon>
    </lineage>
</organism>
<dbReference type="EC" id="2.7.1.50" evidence="1"/>
<dbReference type="EMBL" id="AE015925">
    <property type="protein sequence ID" value="AAP04955.1"/>
    <property type="molecule type" value="Genomic_DNA"/>
</dbReference>
<dbReference type="RefSeq" id="WP_011006174.1">
    <property type="nucleotide sequence ID" value="NC_003361.3"/>
</dbReference>
<dbReference type="SMR" id="Q824E8"/>
<dbReference type="STRING" id="227941.CCA_00204"/>
<dbReference type="KEGG" id="cca:CCA_00204"/>
<dbReference type="eggNOG" id="COG2145">
    <property type="taxonomic scope" value="Bacteria"/>
</dbReference>
<dbReference type="HOGENOM" id="CLU_019943_0_1_0"/>
<dbReference type="OrthoDB" id="9778146at2"/>
<dbReference type="UniPathway" id="UPA00060">
    <property type="reaction ID" value="UER00139"/>
</dbReference>
<dbReference type="Proteomes" id="UP000002193">
    <property type="component" value="Chromosome"/>
</dbReference>
<dbReference type="GO" id="GO:0005524">
    <property type="term" value="F:ATP binding"/>
    <property type="evidence" value="ECO:0007669"/>
    <property type="project" value="UniProtKB-UniRule"/>
</dbReference>
<dbReference type="GO" id="GO:0004417">
    <property type="term" value="F:hydroxyethylthiazole kinase activity"/>
    <property type="evidence" value="ECO:0007669"/>
    <property type="project" value="UniProtKB-UniRule"/>
</dbReference>
<dbReference type="GO" id="GO:0000287">
    <property type="term" value="F:magnesium ion binding"/>
    <property type="evidence" value="ECO:0007669"/>
    <property type="project" value="UniProtKB-UniRule"/>
</dbReference>
<dbReference type="GO" id="GO:0009228">
    <property type="term" value="P:thiamine biosynthetic process"/>
    <property type="evidence" value="ECO:0007669"/>
    <property type="project" value="UniProtKB-KW"/>
</dbReference>
<dbReference type="GO" id="GO:0009229">
    <property type="term" value="P:thiamine diphosphate biosynthetic process"/>
    <property type="evidence" value="ECO:0007669"/>
    <property type="project" value="UniProtKB-UniRule"/>
</dbReference>
<dbReference type="CDD" id="cd01170">
    <property type="entry name" value="THZ_kinase"/>
    <property type="match status" value="1"/>
</dbReference>
<dbReference type="Gene3D" id="3.40.1190.20">
    <property type="match status" value="1"/>
</dbReference>
<dbReference type="HAMAP" id="MF_00228">
    <property type="entry name" value="Thz_kinase"/>
    <property type="match status" value="1"/>
</dbReference>
<dbReference type="InterPro" id="IPR000417">
    <property type="entry name" value="Hyethyz_kinase"/>
</dbReference>
<dbReference type="InterPro" id="IPR029056">
    <property type="entry name" value="Ribokinase-like"/>
</dbReference>
<dbReference type="NCBIfam" id="NF006830">
    <property type="entry name" value="PRK09355.1"/>
    <property type="match status" value="1"/>
</dbReference>
<dbReference type="Pfam" id="PF02110">
    <property type="entry name" value="HK"/>
    <property type="match status" value="1"/>
</dbReference>
<dbReference type="PIRSF" id="PIRSF000513">
    <property type="entry name" value="Thz_kinase"/>
    <property type="match status" value="1"/>
</dbReference>
<dbReference type="PRINTS" id="PR01099">
    <property type="entry name" value="HYETHTZKNASE"/>
</dbReference>
<dbReference type="SUPFAM" id="SSF53613">
    <property type="entry name" value="Ribokinase-like"/>
    <property type="match status" value="1"/>
</dbReference>
<proteinExistence type="inferred from homology"/>
<name>THIM_CHLCV</name>
<keyword id="KW-0067">ATP-binding</keyword>
<keyword id="KW-0418">Kinase</keyword>
<keyword id="KW-0460">Magnesium</keyword>
<keyword id="KW-0479">Metal-binding</keyword>
<keyword id="KW-0547">Nucleotide-binding</keyword>
<keyword id="KW-0784">Thiamine biosynthesis</keyword>
<keyword id="KW-0808">Transferase</keyword>
<evidence type="ECO:0000255" key="1">
    <source>
        <dbReference type="HAMAP-Rule" id="MF_00228"/>
    </source>
</evidence>
<reference key="1">
    <citation type="journal article" date="2003" name="Nucleic Acids Res.">
        <title>Genome sequence of Chlamydophila caviae (Chlamydia psittaci GPIC): examining the role of niche-specific genes in the evolution of the Chlamydiaceae.</title>
        <authorList>
            <person name="Read T.D."/>
            <person name="Myers G.S.A."/>
            <person name="Brunham R.C."/>
            <person name="Nelson W.C."/>
            <person name="Paulsen I.T."/>
            <person name="Heidelberg J.F."/>
            <person name="Holtzapple E.K."/>
            <person name="Khouri H.M."/>
            <person name="Federova N.B."/>
            <person name="Carty H.A."/>
            <person name="Umayam L.A."/>
            <person name="Haft D.H."/>
            <person name="Peterson J.D."/>
            <person name="Beanan M.J."/>
            <person name="White O."/>
            <person name="Salzberg S.L."/>
            <person name="Hsia R.-C."/>
            <person name="McClarty G."/>
            <person name="Rank R.G."/>
            <person name="Bavoil P.M."/>
            <person name="Fraser C.M."/>
        </authorList>
    </citation>
    <scope>NUCLEOTIDE SEQUENCE [LARGE SCALE GENOMIC DNA]</scope>
    <source>
        <strain>ATCC VR-813 / DSM 19441 / 03DC25 / GPIC</strain>
    </source>
</reference>
<feature type="chain" id="PRO_1000021502" description="Hydroxyethylthiazole kinase">
    <location>
        <begin position="1"/>
        <end position="262"/>
    </location>
</feature>
<feature type="binding site" evidence="1">
    <location>
        <position position="44"/>
    </location>
    <ligand>
        <name>substrate</name>
    </ligand>
</feature>
<feature type="binding site" evidence="1">
    <location>
        <position position="118"/>
    </location>
    <ligand>
        <name>ATP</name>
        <dbReference type="ChEBI" id="CHEBI:30616"/>
    </ligand>
</feature>
<feature type="binding site" evidence="1">
    <location>
        <position position="166"/>
    </location>
    <ligand>
        <name>ATP</name>
        <dbReference type="ChEBI" id="CHEBI:30616"/>
    </ligand>
</feature>
<feature type="binding site" evidence="1">
    <location>
        <position position="193"/>
    </location>
    <ligand>
        <name>substrate</name>
    </ligand>
</feature>
<comment type="function">
    <text evidence="1">Catalyzes the phosphorylation of the hydroxyl group of 4-methyl-5-beta-hydroxyethylthiazole (THZ).</text>
</comment>
<comment type="catalytic activity">
    <reaction evidence="1">
        <text>5-(2-hydroxyethyl)-4-methylthiazole + ATP = 4-methyl-5-(2-phosphooxyethyl)-thiazole + ADP + H(+)</text>
        <dbReference type="Rhea" id="RHEA:24212"/>
        <dbReference type="ChEBI" id="CHEBI:15378"/>
        <dbReference type="ChEBI" id="CHEBI:17957"/>
        <dbReference type="ChEBI" id="CHEBI:30616"/>
        <dbReference type="ChEBI" id="CHEBI:58296"/>
        <dbReference type="ChEBI" id="CHEBI:456216"/>
        <dbReference type="EC" id="2.7.1.50"/>
    </reaction>
</comment>
<comment type="cofactor">
    <cofactor evidence="1">
        <name>Mg(2+)</name>
        <dbReference type="ChEBI" id="CHEBI:18420"/>
    </cofactor>
</comment>
<comment type="pathway">
    <text evidence="1">Cofactor biosynthesis; thiamine diphosphate biosynthesis; 4-methyl-5-(2-phosphoethyl)-thiazole from 5-(2-hydroxyethyl)-4-methylthiazole: step 1/1.</text>
</comment>
<comment type="similarity">
    <text evidence="1">Belongs to the Thz kinase family.</text>
</comment>
<gene>
    <name evidence="1" type="primary">thiM</name>
    <name type="ordered locus">CCA_00204</name>
</gene>
<accession>Q824E8</accession>
<sequence length="262" mass="28765">MLEQMYEALQRLRKEKPVILNITNYVSMDFLANCFLAIGASPIMSVSDLELEELIGLSSAVYLNIGTLDHLFIQRSYRAVDIAIRQNKPIIFDPVGSGTTKIRTEVSHHLLAHSTIVRGNASKILSFGDLSIKTRGVDSANTTHDAKETAIALANECLCGCAIAVTGAVDFITDGKRSATIELGDPLMSHVTGMGCSLTGVLAAFRSVIDDSFEAARLGVEYFSLCGMLARERCEGPGLFKAYFLDELYAADFDRMRRYYEQ</sequence>
<protein>
    <recommendedName>
        <fullName evidence="1">Hydroxyethylthiazole kinase</fullName>
        <ecNumber evidence="1">2.7.1.50</ecNumber>
    </recommendedName>
    <alternativeName>
        <fullName evidence="1">4-methyl-5-beta-hydroxyethylthiazole kinase</fullName>
        <shortName evidence="1">TH kinase</shortName>
        <shortName evidence="1">Thz kinase</shortName>
    </alternativeName>
</protein>